<protein>
    <recommendedName>
        <fullName>Mitochondrial import inner membrane translocase subunit TIM10</fullName>
    </recommendedName>
</protein>
<comment type="function">
    <text evidence="1">Mitochondrial intermembrane chaperone that participates in the import and insertion of multi-pass transmembrane proteins into the mitochondrial inner membrane. Also required for the transfer of beta-barrel precursors from the TOM complex to the sorting and assembly machinery (SAM complex) of the outer membrane. Acts as a chaperone-like protein that protects the hydrophobic precursors from aggregation and guide them through the mitochondrial intermembrane space (By similarity).</text>
</comment>
<comment type="subunit">
    <text evidence="1">Heterohexamer; composed of 3 copies of TIM9 and 3 copies of TIM10, named soluble 70 kDa complex. Associates directly with the TIM22 complex, whose core is composed of TIM22 and TIM54. Interacts with the transmembrane regions of multi-pass transmembrane proteins in transit (By similarity).</text>
</comment>
<comment type="subcellular location">
    <subcellularLocation>
        <location evidence="1">Mitochondrion inner membrane</location>
        <topology evidence="1">Peripheral membrane protein</topology>
        <orientation evidence="1">Intermembrane side</orientation>
    </subcellularLocation>
</comment>
<comment type="domain">
    <text evidence="1">The twin CX3C motif contains 4 conserved Cys residues that form 2 disulfide bonds in the mitochondrial intermembrane space. However, during the transit of TIM10 from cytoplasm into mitochondrion, the Cys residues probably coordinate zinc, thereby preventing folding and allowing its transfer across mitochondrial outer membrane (By similarity).</text>
</comment>
<comment type="similarity">
    <text evidence="2">Belongs to the small Tim family.</text>
</comment>
<reference key="1">
    <citation type="journal article" date="2005" name="Science">
        <title>The genome of the basidiomycetous yeast and human pathogen Cryptococcus neoformans.</title>
        <authorList>
            <person name="Loftus B.J."/>
            <person name="Fung E."/>
            <person name="Roncaglia P."/>
            <person name="Rowley D."/>
            <person name="Amedeo P."/>
            <person name="Bruno D."/>
            <person name="Vamathevan J."/>
            <person name="Miranda M."/>
            <person name="Anderson I.J."/>
            <person name="Fraser J.A."/>
            <person name="Allen J.E."/>
            <person name="Bosdet I.E."/>
            <person name="Brent M.R."/>
            <person name="Chiu R."/>
            <person name="Doering T.L."/>
            <person name="Donlin M.J."/>
            <person name="D'Souza C.A."/>
            <person name="Fox D.S."/>
            <person name="Grinberg V."/>
            <person name="Fu J."/>
            <person name="Fukushima M."/>
            <person name="Haas B.J."/>
            <person name="Huang J.C."/>
            <person name="Janbon G."/>
            <person name="Jones S.J.M."/>
            <person name="Koo H.L."/>
            <person name="Krzywinski M.I."/>
            <person name="Kwon-Chung K.J."/>
            <person name="Lengeler K.B."/>
            <person name="Maiti R."/>
            <person name="Marra M.A."/>
            <person name="Marra R.E."/>
            <person name="Mathewson C.A."/>
            <person name="Mitchell T.G."/>
            <person name="Pertea M."/>
            <person name="Riggs F.R."/>
            <person name="Salzberg S.L."/>
            <person name="Schein J.E."/>
            <person name="Shvartsbeyn A."/>
            <person name="Shin H."/>
            <person name="Shumway M."/>
            <person name="Specht C.A."/>
            <person name="Suh B.B."/>
            <person name="Tenney A."/>
            <person name="Utterback T.R."/>
            <person name="Wickes B.L."/>
            <person name="Wortman J.R."/>
            <person name="Wye N.H."/>
            <person name="Kronstad J.W."/>
            <person name="Lodge J.K."/>
            <person name="Heitman J."/>
            <person name="Davis R.W."/>
            <person name="Fraser C.M."/>
            <person name="Hyman R.W."/>
        </authorList>
    </citation>
    <scope>NUCLEOTIDE SEQUENCE [LARGE SCALE GENOMIC DNA]</scope>
    <source>
        <strain>JEC21 / ATCC MYA-565</strain>
    </source>
</reference>
<gene>
    <name type="primary">TIM10</name>
    <name type="ordered locus">CND03700</name>
</gene>
<name>TIM10_CRYNJ</name>
<evidence type="ECO:0000250" key="1"/>
<evidence type="ECO:0000305" key="2"/>
<organism>
    <name type="scientific">Cryptococcus neoformans var. neoformans serotype D (strain JEC21 / ATCC MYA-565)</name>
    <name type="common">Filobasidiella neoformans</name>
    <dbReference type="NCBI Taxonomy" id="214684"/>
    <lineage>
        <taxon>Eukaryota</taxon>
        <taxon>Fungi</taxon>
        <taxon>Dikarya</taxon>
        <taxon>Basidiomycota</taxon>
        <taxon>Agaricomycotina</taxon>
        <taxon>Tremellomycetes</taxon>
        <taxon>Tremellales</taxon>
        <taxon>Cryptococcaceae</taxon>
        <taxon>Cryptococcus</taxon>
        <taxon>Cryptococcus neoformans species complex</taxon>
    </lineage>
</organism>
<feature type="chain" id="PRO_0000228062" description="Mitochondrial import inner membrane translocase subunit TIM10">
    <location>
        <begin position="1"/>
        <end position="102"/>
    </location>
</feature>
<feature type="short sequence motif" description="Twin CX3C motif">
    <location>
        <begin position="42"/>
        <end position="72"/>
    </location>
</feature>
<feature type="disulfide bond" evidence="1">
    <location>
        <begin position="42"/>
        <end position="72"/>
    </location>
</feature>
<feature type="disulfide bond" evidence="1">
    <location>
        <begin position="46"/>
        <end position="68"/>
    </location>
</feature>
<keyword id="KW-0143">Chaperone</keyword>
<keyword id="KW-1015">Disulfide bond</keyword>
<keyword id="KW-0472">Membrane</keyword>
<keyword id="KW-0479">Metal-binding</keyword>
<keyword id="KW-0496">Mitochondrion</keyword>
<keyword id="KW-0999">Mitochondrion inner membrane</keyword>
<keyword id="KW-0653">Protein transport</keyword>
<keyword id="KW-1185">Reference proteome</keyword>
<keyword id="KW-0811">Translocation</keyword>
<keyword id="KW-0813">Transport</keyword>
<keyword id="KW-0862">Zinc</keyword>
<proteinExistence type="inferred from homology"/>
<dbReference type="EMBL" id="AE017344">
    <property type="protein sequence ID" value="AAW42886.1"/>
    <property type="molecule type" value="Genomic_DNA"/>
</dbReference>
<dbReference type="RefSeq" id="XP_570193.1">
    <property type="nucleotide sequence ID" value="XM_570193.1"/>
</dbReference>
<dbReference type="SMR" id="P0CR98"/>
<dbReference type="FunCoup" id="P0CR98">
    <property type="interactions" value="286"/>
</dbReference>
<dbReference type="STRING" id="214684.P0CR98"/>
<dbReference type="PaxDb" id="214684-P0CR98"/>
<dbReference type="EnsemblFungi" id="AAW42886">
    <property type="protein sequence ID" value="AAW42886"/>
    <property type="gene ID" value="CND03700"/>
</dbReference>
<dbReference type="GeneID" id="3257123"/>
<dbReference type="KEGG" id="cne:CND03700"/>
<dbReference type="VEuPathDB" id="FungiDB:CND03700"/>
<dbReference type="eggNOG" id="KOG3480">
    <property type="taxonomic scope" value="Eukaryota"/>
</dbReference>
<dbReference type="HOGENOM" id="CLU_162151_1_0_1"/>
<dbReference type="InParanoid" id="P0CR98"/>
<dbReference type="OMA" id="VGENMQK"/>
<dbReference type="OrthoDB" id="274922at2759"/>
<dbReference type="Proteomes" id="UP000002149">
    <property type="component" value="Chromosome 4"/>
</dbReference>
<dbReference type="GO" id="GO:0005743">
    <property type="term" value="C:mitochondrial inner membrane"/>
    <property type="evidence" value="ECO:0000318"/>
    <property type="project" value="GO_Central"/>
</dbReference>
<dbReference type="GO" id="GO:0046872">
    <property type="term" value="F:metal ion binding"/>
    <property type="evidence" value="ECO:0007669"/>
    <property type="project" value="UniProtKB-KW"/>
</dbReference>
<dbReference type="GO" id="GO:0045039">
    <property type="term" value="P:protein insertion into mitochondrial inner membrane"/>
    <property type="evidence" value="ECO:0000318"/>
    <property type="project" value="GO_Central"/>
</dbReference>
<dbReference type="FunFam" id="1.10.287.810:FF:000002">
    <property type="entry name" value="Mitochondrial import inner membrane translocase subunit tim10"/>
    <property type="match status" value="1"/>
</dbReference>
<dbReference type="Gene3D" id="1.10.287.810">
    <property type="entry name" value="Mitochondrial import inner membrane translocase subunit tim13 like domains"/>
    <property type="match status" value="1"/>
</dbReference>
<dbReference type="InterPro" id="IPR004217">
    <property type="entry name" value="Tim10-like"/>
</dbReference>
<dbReference type="InterPro" id="IPR035427">
    <property type="entry name" value="Tim10-like_dom_sf"/>
</dbReference>
<dbReference type="PANTHER" id="PTHR11038">
    <property type="entry name" value="MITOCHONDRIAL IMPORT INNER MEMBRANE TRANSLOCASE SUBUNIT TIM10"/>
    <property type="match status" value="1"/>
</dbReference>
<dbReference type="PANTHER" id="PTHR11038:SF16">
    <property type="entry name" value="MITOCHONDRIAL IMPORT INNER MEMBRANE TRANSLOCASE SUBUNIT TIM10"/>
    <property type="match status" value="1"/>
</dbReference>
<dbReference type="Pfam" id="PF02953">
    <property type="entry name" value="zf-Tim10_DDP"/>
    <property type="match status" value="1"/>
</dbReference>
<dbReference type="SUPFAM" id="SSF144122">
    <property type="entry name" value="Tim10-like"/>
    <property type="match status" value="1"/>
</dbReference>
<accession>P0CR98</accession>
<accession>Q55U43</accession>
<accession>Q5KIA0</accession>
<sequence>MSFLFGGNNRSVEGSVDPAKIEMAVAELDMITDVFNRLVNSCHTKCISSTPLNHRYAEGDLLKGESVCIDRCTAKFFEVNKKVGERMSAMGSAAQATGSFGR</sequence>